<organism>
    <name type="scientific">Caenorhabditis elegans</name>
    <dbReference type="NCBI Taxonomy" id="6239"/>
    <lineage>
        <taxon>Eukaryota</taxon>
        <taxon>Metazoa</taxon>
        <taxon>Ecdysozoa</taxon>
        <taxon>Nematoda</taxon>
        <taxon>Chromadorea</taxon>
        <taxon>Rhabditida</taxon>
        <taxon>Rhabditina</taxon>
        <taxon>Rhabditomorpha</taxon>
        <taxon>Rhabditoidea</taxon>
        <taxon>Rhabditidae</taxon>
        <taxon>Peloderinae</taxon>
        <taxon>Caenorhabditis</taxon>
    </lineage>
</organism>
<name>EF2_CAEEL</name>
<reference key="1">
    <citation type="journal article" date="1991" name="DNA Cell Biol.">
        <title>Molecular cloning and characterization of the Caenorhabditis elegans elongation factor 2 gene (eft-2).</title>
        <authorList>
            <person name="Ofulue E.N."/>
            <person name="Candido E.P.M."/>
        </authorList>
    </citation>
    <scope>NUCLEOTIDE SEQUENCE [MRNA]</scope>
</reference>
<reference key="2">
    <citation type="journal article" date="1998" name="Science">
        <title>Genome sequence of the nematode C. elegans: a platform for investigating biology.</title>
        <authorList>
            <consortium name="The C. elegans sequencing consortium"/>
        </authorList>
    </citation>
    <scope>NUCLEOTIDE SEQUENCE [LARGE SCALE GENOMIC DNA]</scope>
    <scope>ALTERNATIVE SPLICING</scope>
    <source>
        <strain>Bristol N2</strain>
    </source>
</reference>
<reference key="3">
    <citation type="journal article" date="2008" name="Genes Dev.">
        <title>Semaphorin controls epidermal morphogenesis by stimulating mRNA translation via eIF2alpha in Caenorhabditis elegans.</title>
        <authorList>
            <person name="Nukazuka A."/>
            <person name="Fujisawa H."/>
            <person name="Inada T."/>
            <person name="Oda Y."/>
            <person name="Takagi S."/>
        </authorList>
    </citation>
    <scope>FUNCTION</scope>
    <scope>DISRUPTION PHENOTYPE</scope>
</reference>
<reference key="4">
    <citation type="journal article" date="2016" name="PLoS Genet.">
        <title>The Caenorhabditis elegans protein FIC-1 is an AMPylase that covalently modifies heat-shock 70 family proteins, translation elongation factors and histones.</title>
        <authorList>
            <person name="Truttmann M.C."/>
            <person name="Cruz V.E."/>
            <person name="Guo X."/>
            <person name="Engert C."/>
            <person name="Schwartz T.U."/>
            <person name="Ploegh H.L."/>
        </authorList>
    </citation>
    <scope>AMPYLATION</scope>
    <scope>IDENTIFICATION BY MASS SPECTROMETRY</scope>
</reference>
<sequence length="852" mass="94796">MVNFTVDEIRALMDRKRNIRNMSVIAHVDHGKSTLTDSLVSKAGIIAGSKAGETRFTDTRKDEQERCITIKSTAISLFFELEKKDLEFVKGENQFETVEVDGKKEKYNGFLINLIDSPGHVDFSSEVTAALRVTDGALVVVDCVSGVCVQTETVLRQAIAERIKPVLFMNKMDRALLELQLGAEELFQTFQRIVENINVIIATYGDDDGPMGPIMVDPSIGNVGFGSGLHGWAFTLKQFAEMYAGKFGVQVDKLMKNLWGDRFFDLKTKKWSSTQTDESKRGFCQFVLDPIFMVFDAVMNIKKDKTAALVEKLGIKLANDEKDLEGKPLMKVFMRKWLPAGDTMLQMIAFHLPSPVTAQKYRMEMLYEGPHDDEAAVAIKTCDPNGPLMMYISKMVPTSDKGRFYAFGRVFSGKVATGMKARIQGPNYVPGKKEDLYEKTIQRTILMMGRFIEPIEDIPSGNIAGLVGVDQYLVKGGTITTYKDAHNMRVMKFSVSPVVRVAVEAKNPADLPKLVEGLKRLAKSDPMVQCIFEESGEHIIAGAGELHLEICLKDLEEDHACIPLKKSDPVVSYRETVQSESNQICLSKSPNKHNRLHCTAQPMPDGLADDIEGGTVNARDEFKARAKILAEKYEYDVTEARKIWCFGPDGTGPNLLMDVTKGVQYLNEIKDSVVAGFQWATREGVLSDENMRGVRFNVHDVTLHADAIHRGGGQIIPTARRVFYASVLTAEPRLLEPVYLVEIQCPEAAVGGIYGVLNRRRGHVFEESQVTGTPMFVVKAYLPVNESFGFTADLRSNTGGQAFPQCVFDHWQVLPGDPLEAGTKPNQIVLDTRKRKGLKEGVPALDNYLDKM</sequence>
<accession>P29691</accession>
<accession>G3MU53</accession>
<accession>O17837</accession>
<keyword id="KW-0025">Alternative splicing</keyword>
<keyword id="KW-0963">Cytoplasm</keyword>
<keyword id="KW-0251">Elongation factor</keyword>
<keyword id="KW-0342">GTP-binding</keyword>
<keyword id="KW-0378">Hydrolase</keyword>
<keyword id="KW-0547">Nucleotide-binding</keyword>
<keyword id="KW-0597">Phosphoprotein</keyword>
<keyword id="KW-0648">Protein biosynthesis</keyword>
<keyword id="KW-1185">Reference proteome</keyword>
<proteinExistence type="evidence at protein level"/>
<comment type="function">
    <text evidence="5">Catalyzes the GTP-dependent ribosomal translocation step during translation elongation. During this step, the ribosome changes from the pre-translocational (PRE) to the post-translocational (POST) state as the newly formed A-site-bound peptidyl-tRNA and P-site-bound deacylated tRNA move to the P and E sites, respectively. Catalyzes the coordinated movement of the two tRNA molecules, the mRNA and conformational changes in the ribosome. Involved in the morphogenesis of epidermal tissues.</text>
</comment>
<comment type="catalytic activity">
    <reaction evidence="3">
        <text>GTP + H2O = GDP + phosphate + H(+)</text>
        <dbReference type="Rhea" id="RHEA:19669"/>
        <dbReference type="ChEBI" id="CHEBI:15377"/>
        <dbReference type="ChEBI" id="CHEBI:15378"/>
        <dbReference type="ChEBI" id="CHEBI:37565"/>
        <dbReference type="ChEBI" id="CHEBI:43474"/>
        <dbReference type="ChEBI" id="CHEBI:58189"/>
    </reaction>
    <physiologicalReaction direction="left-to-right" evidence="3">
        <dbReference type="Rhea" id="RHEA:19670"/>
    </physiologicalReaction>
</comment>
<comment type="subcellular location">
    <subcellularLocation>
        <location evidence="3">Cytoplasm</location>
    </subcellularLocation>
</comment>
<comment type="alternative products">
    <event type="alternative splicing"/>
    <isoform>
        <id>P29691-1</id>
        <name>a</name>
        <sequence type="displayed"/>
    </isoform>
    <isoform>
        <id>P29691-2</id>
        <name>b</name>
        <sequence type="described" ref="VSP_044101"/>
    </isoform>
</comment>
<comment type="PTM">
    <text evidence="2">Phosphorylation by EF-2 kinase completely inactivates EF-2.</text>
</comment>
<comment type="PTM">
    <text evidence="6">AMPylated by fic-1.</text>
</comment>
<comment type="disruption phenotype">
    <text evidence="5">Ray defect.</text>
</comment>
<comment type="similarity">
    <text evidence="4">Belongs to the TRAFAC class translation factor GTPase superfamily. Classic translation factor GTPase family. EF-G/EF-2 subfamily.</text>
</comment>
<gene>
    <name type="primary">eef-2</name>
    <name type="ORF">F25H5.4</name>
</gene>
<feature type="initiator methionine" description="Removed" evidence="1">
    <location>
        <position position="1"/>
    </location>
</feature>
<feature type="chain" id="PRO_0000091008" description="Elongation factor 2">
    <location>
        <begin position="2"/>
        <end position="852"/>
    </location>
</feature>
<feature type="domain" description="tr-type G" evidence="4">
    <location>
        <begin position="17"/>
        <end position="356"/>
    </location>
</feature>
<feature type="binding site" evidence="3">
    <location>
        <begin position="26"/>
        <end position="33"/>
    </location>
    <ligand>
        <name>GTP</name>
        <dbReference type="ChEBI" id="CHEBI:37565"/>
    </ligand>
</feature>
<feature type="binding site" evidence="3">
    <location>
        <begin position="170"/>
        <end position="173"/>
    </location>
    <ligand>
        <name>GTP</name>
        <dbReference type="ChEBI" id="CHEBI:37565"/>
    </ligand>
</feature>
<feature type="binding site" evidence="3">
    <location>
        <begin position="227"/>
        <end position="229"/>
    </location>
    <ligand>
        <name>GTP</name>
        <dbReference type="ChEBI" id="CHEBI:37565"/>
    </ligand>
</feature>
<feature type="modified residue" description="Phosphothreonine" evidence="2">
    <location>
        <position position="57"/>
    </location>
</feature>
<feature type="modified residue" description="Phosphothreonine" evidence="2">
    <location>
        <position position="59"/>
    </location>
</feature>
<feature type="modified residue" description="Diphthamide" evidence="3">
    <location>
        <position position="709"/>
    </location>
</feature>
<feature type="splice variant" id="VSP_044101" description="In isoform b." evidence="7">
    <location>
        <begin position="1"/>
        <end position="12"/>
    </location>
</feature>
<feature type="sequence conflict" description="In Ref. 1; AAD03339." evidence="7" ref="1">
    <original>R</original>
    <variation>G</variation>
    <location>
        <position position="132"/>
    </location>
</feature>
<feature type="sequence conflict" description="In Ref. 1; AAD03339." evidence="7" ref="1">
    <original>N</original>
    <variation>S</variation>
    <location>
        <position position="617"/>
    </location>
</feature>
<feature type="sequence conflict" description="In Ref. 1; AAD03339." evidence="7" ref="1">
    <original>ILA</original>
    <variation>YPG</variation>
    <location>
        <begin position="628"/>
        <end position="630"/>
    </location>
</feature>
<feature type="sequence conflict" description="In Ref. 1; AAD03339." evidence="7" ref="1">
    <original>D</original>
    <variation>A</variation>
    <location>
        <position position="636"/>
    </location>
</feature>
<evidence type="ECO:0000250" key="1"/>
<evidence type="ECO:0000250" key="2">
    <source>
        <dbReference type="UniProtKB" id="P13639"/>
    </source>
</evidence>
<evidence type="ECO:0000250" key="3">
    <source>
        <dbReference type="UniProtKB" id="P32324"/>
    </source>
</evidence>
<evidence type="ECO:0000255" key="4">
    <source>
        <dbReference type="PROSITE-ProRule" id="PRU01059"/>
    </source>
</evidence>
<evidence type="ECO:0000269" key="5">
    <source>
    </source>
</evidence>
<evidence type="ECO:0000269" key="6">
    <source>
    </source>
</evidence>
<evidence type="ECO:0000305" key="7"/>
<protein>
    <recommendedName>
        <fullName>Elongation factor 2</fullName>
        <shortName>EF-2</shortName>
        <ecNumber evidence="3">3.6.5.-</ecNumber>
    </recommendedName>
</protein>
<dbReference type="EC" id="3.6.5.-" evidence="3"/>
<dbReference type="EMBL" id="M86959">
    <property type="protein sequence ID" value="AAD03339.1"/>
    <property type="molecule type" value="mRNA"/>
</dbReference>
<dbReference type="EMBL" id="Z81068">
    <property type="protein sequence ID" value="CAB02985.1"/>
    <property type="molecule type" value="Genomic_DNA"/>
</dbReference>
<dbReference type="EMBL" id="Z81068">
    <property type="protein sequence ID" value="CCD31064.1"/>
    <property type="molecule type" value="Genomic_DNA"/>
</dbReference>
<dbReference type="PIR" id="A40411">
    <property type="entry name" value="A40411"/>
</dbReference>
<dbReference type="PIR" id="T21362">
    <property type="entry name" value="T21362"/>
</dbReference>
<dbReference type="RefSeq" id="NP_001251010.1">
    <property type="nucleotide sequence ID" value="NM_001264081.1"/>
</dbReference>
<dbReference type="RefSeq" id="NP_001251011.1">
    <property type="nucleotide sequence ID" value="NM_001264082.1"/>
</dbReference>
<dbReference type="RefSeq" id="NP_001367294.1">
    <molecule id="P29691-2"/>
    <property type="nucleotide sequence ID" value="NM_001380979.1"/>
</dbReference>
<dbReference type="RefSeq" id="NP_001369996.1">
    <molecule id="P29691-1"/>
    <property type="nucleotide sequence ID" value="NM_001383584.2"/>
</dbReference>
<dbReference type="SMR" id="P29691"/>
<dbReference type="BioGRID" id="38174">
    <property type="interactions" value="102"/>
</dbReference>
<dbReference type="DIP" id="DIP-26688N"/>
<dbReference type="FunCoup" id="P29691">
    <property type="interactions" value="2293"/>
</dbReference>
<dbReference type="IntAct" id="P29691">
    <property type="interactions" value="5"/>
</dbReference>
<dbReference type="MINT" id="P29691"/>
<dbReference type="STRING" id="6239.F25H5.4a.3"/>
<dbReference type="iPTMnet" id="P29691"/>
<dbReference type="PaxDb" id="6239-F25H5.4a.1"/>
<dbReference type="PeptideAtlas" id="P29691"/>
<dbReference type="EnsemblMetazoa" id="F25H5.4a.1">
    <molecule id="P29691-1"/>
    <property type="protein sequence ID" value="F25H5.4a.1"/>
    <property type="gene ID" value="WBGene00001167"/>
</dbReference>
<dbReference type="EnsemblMetazoa" id="F25H5.4a.2">
    <molecule id="P29691-1"/>
    <property type="protein sequence ID" value="F25H5.4a.2"/>
    <property type="gene ID" value="WBGene00001167"/>
</dbReference>
<dbReference type="EnsemblMetazoa" id="F25H5.4b.1">
    <molecule id="P29691-2"/>
    <property type="protein sequence ID" value="F25H5.4b.1"/>
    <property type="gene ID" value="WBGene00001167"/>
</dbReference>
<dbReference type="GeneID" id="172743"/>
<dbReference type="UCSC" id="F25H5.4.2">
    <molecule id="P29691-1"/>
    <property type="organism name" value="c. elegans"/>
</dbReference>
<dbReference type="AGR" id="WB:WBGene00001167"/>
<dbReference type="WormBase" id="F25H5.4a">
    <molecule id="P29691-1"/>
    <property type="protein sequence ID" value="CE15900"/>
    <property type="gene ID" value="WBGene00001167"/>
    <property type="gene designation" value="eef-2"/>
</dbReference>
<dbReference type="WormBase" id="F25H5.4b">
    <molecule id="P29691-2"/>
    <property type="protein sequence ID" value="CE46149"/>
    <property type="gene ID" value="WBGene00001167"/>
    <property type="gene designation" value="eef-2"/>
</dbReference>
<dbReference type="eggNOG" id="KOG0469">
    <property type="taxonomic scope" value="Eukaryota"/>
</dbReference>
<dbReference type="GeneTree" id="ENSGT00940000154662"/>
<dbReference type="HOGENOM" id="CLU_002794_11_2_1"/>
<dbReference type="InParanoid" id="P29691"/>
<dbReference type="OMA" id="ASWNTEN"/>
<dbReference type="OrthoDB" id="364892at2759"/>
<dbReference type="PhylomeDB" id="P29691"/>
<dbReference type="Reactome" id="R-CEL-156902">
    <property type="pathway name" value="Peptide chain elongation"/>
</dbReference>
<dbReference type="Reactome" id="R-CEL-5358493">
    <property type="pathway name" value="Synthesis of diphthamide-EEF2"/>
</dbReference>
<dbReference type="Reactome" id="R-CEL-6798695">
    <property type="pathway name" value="Neutrophil degranulation"/>
</dbReference>
<dbReference type="SignaLink" id="P29691"/>
<dbReference type="PRO" id="PR:P29691"/>
<dbReference type="Proteomes" id="UP000001940">
    <property type="component" value="Chromosome I"/>
</dbReference>
<dbReference type="Bgee" id="WBGene00001167">
    <property type="expression patterns" value="Expressed in germ line (C elegans) and 4 other cell types or tissues"/>
</dbReference>
<dbReference type="GO" id="GO:0005829">
    <property type="term" value="C:cytosol"/>
    <property type="evidence" value="ECO:0000318"/>
    <property type="project" value="GO_Central"/>
</dbReference>
<dbReference type="GO" id="GO:1990904">
    <property type="term" value="C:ribonucleoprotein complex"/>
    <property type="evidence" value="ECO:0000318"/>
    <property type="project" value="GO_Central"/>
</dbReference>
<dbReference type="GO" id="GO:0005525">
    <property type="term" value="F:GTP binding"/>
    <property type="evidence" value="ECO:0007669"/>
    <property type="project" value="UniProtKB-KW"/>
</dbReference>
<dbReference type="GO" id="GO:0003924">
    <property type="term" value="F:GTPase activity"/>
    <property type="evidence" value="ECO:0000318"/>
    <property type="project" value="GO_Central"/>
</dbReference>
<dbReference type="GO" id="GO:0043022">
    <property type="term" value="F:ribosome binding"/>
    <property type="evidence" value="ECO:0000318"/>
    <property type="project" value="GO_Central"/>
</dbReference>
<dbReference type="GO" id="GO:0003746">
    <property type="term" value="F:translation elongation factor activity"/>
    <property type="evidence" value="ECO:0000318"/>
    <property type="project" value="GO_Central"/>
</dbReference>
<dbReference type="GO" id="GO:0050829">
    <property type="term" value="P:defense response to Gram-negative bacterium"/>
    <property type="evidence" value="ECO:0000315"/>
    <property type="project" value="UniProtKB"/>
</dbReference>
<dbReference type="GO" id="GO:0010629">
    <property type="term" value="P:negative regulation of gene expression"/>
    <property type="evidence" value="ECO:0000315"/>
    <property type="project" value="UniProtKB"/>
</dbReference>
<dbReference type="GO" id="GO:0006414">
    <property type="term" value="P:translational elongation"/>
    <property type="evidence" value="ECO:0000318"/>
    <property type="project" value="GO_Central"/>
</dbReference>
<dbReference type="CDD" id="cd01681">
    <property type="entry name" value="aeEF2_snRNP_like_IV"/>
    <property type="match status" value="1"/>
</dbReference>
<dbReference type="CDD" id="cd04096">
    <property type="entry name" value="eEF2_snRNP_like_C"/>
    <property type="match status" value="1"/>
</dbReference>
<dbReference type="CDD" id="cd01885">
    <property type="entry name" value="EF2"/>
    <property type="match status" value="1"/>
</dbReference>
<dbReference type="CDD" id="cd16261">
    <property type="entry name" value="EF2_snRNP_III"/>
    <property type="match status" value="1"/>
</dbReference>
<dbReference type="FunFam" id="3.90.1430.10:FF:000003">
    <property type="entry name" value="Elongation factor 2"/>
    <property type="match status" value="1"/>
</dbReference>
<dbReference type="FunFam" id="2.40.30.10:FF:000010">
    <property type="entry name" value="Translation elongation factor 2"/>
    <property type="match status" value="1"/>
</dbReference>
<dbReference type="FunFam" id="3.30.230.10:FF:000006">
    <property type="entry name" value="Translation elongation factor 2"/>
    <property type="match status" value="1"/>
</dbReference>
<dbReference type="FunFam" id="3.30.70.240:FF:000003">
    <property type="entry name" value="Translation elongation factor 2"/>
    <property type="match status" value="1"/>
</dbReference>
<dbReference type="FunFam" id="3.30.70.870:FF:000002">
    <property type="entry name" value="Translation elongation factor 2"/>
    <property type="match status" value="1"/>
</dbReference>
<dbReference type="FunFam" id="3.40.50.300:FF:000058">
    <property type="entry name" value="Translation elongation factor 2"/>
    <property type="match status" value="1"/>
</dbReference>
<dbReference type="Gene3D" id="3.30.230.10">
    <property type="match status" value="1"/>
</dbReference>
<dbReference type="Gene3D" id="3.30.70.240">
    <property type="match status" value="1"/>
</dbReference>
<dbReference type="Gene3D" id="3.30.70.870">
    <property type="entry name" value="Elongation Factor G (Translational Gtpase), domain 3"/>
    <property type="match status" value="1"/>
</dbReference>
<dbReference type="Gene3D" id="3.40.50.300">
    <property type="entry name" value="P-loop containing nucleotide triphosphate hydrolases"/>
    <property type="match status" value="1"/>
</dbReference>
<dbReference type="Gene3D" id="2.40.30.10">
    <property type="entry name" value="Translation factors"/>
    <property type="match status" value="1"/>
</dbReference>
<dbReference type="Gene3D" id="3.90.1430.10">
    <property type="entry name" value="Yeast translation eEF2 (G' domain)"/>
    <property type="match status" value="1"/>
</dbReference>
<dbReference type="InterPro" id="IPR041095">
    <property type="entry name" value="EFG_II"/>
</dbReference>
<dbReference type="InterPro" id="IPR035647">
    <property type="entry name" value="EFG_III/V"/>
</dbReference>
<dbReference type="InterPro" id="IPR000640">
    <property type="entry name" value="EFG_V-like"/>
</dbReference>
<dbReference type="InterPro" id="IPR004161">
    <property type="entry name" value="EFTu-like_2"/>
</dbReference>
<dbReference type="InterPro" id="IPR031157">
    <property type="entry name" value="G_TR_CS"/>
</dbReference>
<dbReference type="InterPro" id="IPR027417">
    <property type="entry name" value="P-loop_NTPase"/>
</dbReference>
<dbReference type="InterPro" id="IPR020568">
    <property type="entry name" value="Ribosomal_Su5_D2-typ_SF"/>
</dbReference>
<dbReference type="InterPro" id="IPR014721">
    <property type="entry name" value="Ribsml_uS5_D2-typ_fold_subgr"/>
</dbReference>
<dbReference type="InterPro" id="IPR005225">
    <property type="entry name" value="Small_GTP-bd"/>
</dbReference>
<dbReference type="InterPro" id="IPR000795">
    <property type="entry name" value="T_Tr_GTP-bd_dom"/>
</dbReference>
<dbReference type="InterPro" id="IPR009000">
    <property type="entry name" value="Transl_B-barrel_sf"/>
</dbReference>
<dbReference type="InterPro" id="IPR005517">
    <property type="entry name" value="Transl_elong_EFG/EF2_IV"/>
</dbReference>
<dbReference type="NCBIfam" id="TIGR00231">
    <property type="entry name" value="small_GTP"/>
    <property type="match status" value="1"/>
</dbReference>
<dbReference type="PANTHER" id="PTHR42908:SF10">
    <property type="entry name" value="EUKARYOTIC TRANSLATION ELONGATION FACTOR 2"/>
    <property type="match status" value="1"/>
</dbReference>
<dbReference type="PANTHER" id="PTHR42908">
    <property type="entry name" value="TRANSLATION ELONGATION FACTOR-RELATED"/>
    <property type="match status" value="1"/>
</dbReference>
<dbReference type="Pfam" id="PF00679">
    <property type="entry name" value="EFG_C"/>
    <property type="match status" value="1"/>
</dbReference>
<dbReference type="Pfam" id="PF14492">
    <property type="entry name" value="EFG_III"/>
    <property type="match status" value="1"/>
</dbReference>
<dbReference type="Pfam" id="PF03764">
    <property type="entry name" value="EFG_IV"/>
    <property type="match status" value="1"/>
</dbReference>
<dbReference type="Pfam" id="PF00009">
    <property type="entry name" value="GTP_EFTU"/>
    <property type="match status" value="1"/>
</dbReference>
<dbReference type="Pfam" id="PF03144">
    <property type="entry name" value="GTP_EFTU_D2"/>
    <property type="match status" value="1"/>
</dbReference>
<dbReference type="PRINTS" id="PR00315">
    <property type="entry name" value="ELONGATNFCT"/>
</dbReference>
<dbReference type="SMART" id="SM00838">
    <property type="entry name" value="EFG_C"/>
    <property type="match status" value="1"/>
</dbReference>
<dbReference type="SMART" id="SM00889">
    <property type="entry name" value="EFG_IV"/>
    <property type="match status" value="1"/>
</dbReference>
<dbReference type="SUPFAM" id="SSF54980">
    <property type="entry name" value="EF-G C-terminal domain-like"/>
    <property type="match status" value="2"/>
</dbReference>
<dbReference type="SUPFAM" id="SSF52540">
    <property type="entry name" value="P-loop containing nucleoside triphosphate hydrolases"/>
    <property type="match status" value="1"/>
</dbReference>
<dbReference type="SUPFAM" id="SSF54211">
    <property type="entry name" value="Ribosomal protein S5 domain 2-like"/>
    <property type="match status" value="1"/>
</dbReference>
<dbReference type="SUPFAM" id="SSF50447">
    <property type="entry name" value="Translation proteins"/>
    <property type="match status" value="1"/>
</dbReference>
<dbReference type="PROSITE" id="PS00301">
    <property type="entry name" value="G_TR_1"/>
    <property type="match status" value="1"/>
</dbReference>
<dbReference type="PROSITE" id="PS51722">
    <property type="entry name" value="G_TR_2"/>
    <property type="match status" value="1"/>
</dbReference>